<protein>
    <recommendedName>
        <fullName evidence="1">Probable 4-amino-4-deoxy-L-arabinose-phosphoundecaprenol flippase subunit ArnF</fullName>
        <shortName evidence="1">L-Ara4N-phosphoundecaprenol flippase subunit ArnF</shortName>
    </recommendedName>
    <alternativeName>
        <fullName evidence="1">Undecaprenyl phosphate-aminoarabinose flippase subunit ArnF</fullName>
    </alternativeName>
</protein>
<dbReference type="EMBL" id="CP000075">
    <property type="protein sequence ID" value="AAY37734.1"/>
    <property type="molecule type" value="Genomic_DNA"/>
</dbReference>
<dbReference type="RefSeq" id="YP_235772.1">
    <property type="nucleotide sequence ID" value="NC_007005.1"/>
</dbReference>
<dbReference type="STRING" id="205918.Psyr_2695"/>
<dbReference type="KEGG" id="psb:Psyr_2695"/>
<dbReference type="PATRIC" id="fig|205918.7.peg.2755"/>
<dbReference type="eggNOG" id="COG2076">
    <property type="taxonomic scope" value="Bacteria"/>
</dbReference>
<dbReference type="HOGENOM" id="CLU_131462_1_0_6"/>
<dbReference type="OrthoDB" id="5592809at2"/>
<dbReference type="UniPathway" id="UPA00030"/>
<dbReference type="Proteomes" id="UP000000426">
    <property type="component" value="Chromosome"/>
</dbReference>
<dbReference type="GO" id="GO:0005886">
    <property type="term" value="C:plasma membrane"/>
    <property type="evidence" value="ECO:0007669"/>
    <property type="project" value="UniProtKB-SubCell"/>
</dbReference>
<dbReference type="GO" id="GO:1901505">
    <property type="term" value="F:carbohydrate derivative transmembrane transporter activity"/>
    <property type="evidence" value="ECO:0007669"/>
    <property type="project" value="InterPro"/>
</dbReference>
<dbReference type="GO" id="GO:0009245">
    <property type="term" value="P:lipid A biosynthetic process"/>
    <property type="evidence" value="ECO:0007669"/>
    <property type="project" value="UniProtKB-UniRule"/>
</dbReference>
<dbReference type="GO" id="GO:0009103">
    <property type="term" value="P:lipopolysaccharide biosynthetic process"/>
    <property type="evidence" value="ECO:0007669"/>
    <property type="project" value="UniProtKB-UniRule"/>
</dbReference>
<dbReference type="Gene3D" id="1.10.3730.20">
    <property type="match status" value="1"/>
</dbReference>
<dbReference type="HAMAP" id="MF_00538">
    <property type="entry name" value="Flippase_ArnF"/>
    <property type="match status" value="1"/>
</dbReference>
<dbReference type="InterPro" id="IPR022832">
    <property type="entry name" value="Flippase_ArnF"/>
</dbReference>
<dbReference type="InterPro" id="IPR000390">
    <property type="entry name" value="Small_drug/metabolite_transptr"/>
</dbReference>
<dbReference type="NCBIfam" id="NF002816">
    <property type="entry name" value="PRK02971.1-2"/>
    <property type="match status" value="1"/>
</dbReference>
<dbReference type="PANTHER" id="PTHR30561:SF9">
    <property type="entry name" value="4-AMINO-4-DEOXY-L-ARABINOSE-PHOSPHOUNDECAPRENOL FLIPPASE SUBUNIT ARNF-RELATED"/>
    <property type="match status" value="1"/>
</dbReference>
<dbReference type="PANTHER" id="PTHR30561">
    <property type="entry name" value="SMR FAMILY PROTON-DEPENDENT DRUG EFFLUX TRANSPORTER SUGE"/>
    <property type="match status" value="1"/>
</dbReference>
<dbReference type="SUPFAM" id="SSF103481">
    <property type="entry name" value="Multidrug resistance efflux transporter EmrE"/>
    <property type="match status" value="1"/>
</dbReference>
<keyword id="KW-0997">Cell inner membrane</keyword>
<keyword id="KW-1003">Cell membrane</keyword>
<keyword id="KW-0441">Lipid A biosynthesis</keyword>
<keyword id="KW-0444">Lipid biosynthesis</keyword>
<keyword id="KW-0443">Lipid metabolism</keyword>
<keyword id="KW-0448">Lipopolysaccharide biosynthesis</keyword>
<keyword id="KW-0472">Membrane</keyword>
<keyword id="KW-0812">Transmembrane</keyword>
<keyword id="KW-1133">Transmembrane helix</keyword>
<keyword id="KW-0813">Transport</keyword>
<name>ARNF_PSEU2</name>
<accession>Q4ZSY8</accession>
<sequence>MTHRRATLCAMASVALVSAAQLGMRWSMSRLPSPVQWLEMQEHAQLDLSALRVVCASITAYALSMLFWLLALRVLPLSRAYSLLSISYALVYTLAATLPFFHETFTVSKTVGVSLIVAGVLTINLRRLPRPSPQDLSHENQRFR</sequence>
<comment type="function">
    <text evidence="1">Translocates 4-amino-4-deoxy-L-arabinose-phosphoundecaprenol (alpha-L-Ara4N-phosphoundecaprenol) from the cytoplasmic to the periplasmic side of the inner membrane.</text>
</comment>
<comment type="pathway">
    <text evidence="1">Bacterial outer membrane biogenesis; lipopolysaccharide biosynthesis.</text>
</comment>
<comment type="subunit">
    <text evidence="1">Heterodimer of ArnE and ArnF.</text>
</comment>
<comment type="subcellular location">
    <subcellularLocation>
        <location evidence="1">Cell inner membrane</location>
        <topology evidence="1">Multi-pass membrane protein</topology>
    </subcellularLocation>
</comment>
<comment type="similarity">
    <text evidence="1">Belongs to the ArnF family.</text>
</comment>
<proteinExistence type="inferred from homology"/>
<evidence type="ECO:0000255" key="1">
    <source>
        <dbReference type="HAMAP-Rule" id="MF_00538"/>
    </source>
</evidence>
<reference key="1">
    <citation type="journal article" date="2005" name="Proc. Natl. Acad. Sci. U.S.A.">
        <title>Comparison of the complete genome sequences of Pseudomonas syringae pv. syringae B728a and pv. tomato DC3000.</title>
        <authorList>
            <person name="Feil H."/>
            <person name="Feil W.S."/>
            <person name="Chain P."/>
            <person name="Larimer F."/>
            <person name="Dibartolo G."/>
            <person name="Copeland A."/>
            <person name="Lykidis A."/>
            <person name="Trong S."/>
            <person name="Nolan M."/>
            <person name="Goltsman E."/>
            <person name="Thiel J."/>
            <person name="Malfatti S."/>
            <person name="Loper J.E."/>
            <person name="Lapidus A."/>
            <person name="Detter J.C."/>
            <person name="Land M."/>
            <person name="Richardson P.M."/>
            <person name="Kyrpides N.C."/>
            <person name="Ivanova N."/>
            <person name="Lindow S.E."/>
        </authorList>
    </citation>
    <scope>NUCLEOTIDE SEQUENCE [LARGE SCALE GENOMIC DNA]</scope>
    <source>
        <strain>B728a</strain>
    </source>
</reference>
<feature type="chain" id="PRO_0000382015" description="Probable 4-amino-4-deoxy-L-arabinose-phosphoundecaprenol flippase subunit ArnF">
    <location>
        <begin position="1"/>
        <end position="144"/>
    </location>
</feature>
<feature type="topological domain" description="Cytoplasmic" evidence="1">
    <location>
        <begin position="1"/>
        <end position="6"/>
    </location>
</feature>
<feature type="transmembrane region" description="Helical" evidence="1">
    <location>
        <begin position="7"/>
        <end position="24"/>
    </location>
</feature>
<feature type="topological domain" description="Periplasmic" evidence="1">
    <location>
        <begin position="25"/>
        <end position="56"/>
    </location>
</feature>
<feature type="transmembrane region" description="Helical" evidence="1">
    <location>
        <begin position="57"/>
        <end position="77"/>
    </location>
</feature>
<feature type="topological domain" description="Cytoplasmic" evidence="1">
    <location>
        <begin position="78"/>
        <end position="80"/>
    </location>
</feature>
<feature type="transmembrane region" description="Helical" evidence="1">
    <location>
        <begin position="81"/>
        <end position="101"/>
    </location>
</feature>
<feature type="topological domain" description="Periplasmic" evidence="1">
    <location>
        <begin position="102"/>
        <end position="104"/>
    </location>
</feature>
<feature type="transmembrane region" description="Helical" evidence="1">
    <location>
        <begin position="105"/>
        <end position="125"/>
    </location>
</feature>
<feature type="topological domain" description="Cytoplasmic" evidence="1">
    <location>
        <begin position="126"/>
        <end position="144"/>
    </location>
</feature>
<organism>
    <name type="scientific">Pseudomonas syringae pv. syringae (strain B728a)</name>
    <dbReference type="NCBI Taxonomy" id="205918"/>
    <lineage>
        <taxon>Bacteria</taxon>
        <taxon>Pseudomonadati</taxon>
        <taxon>Pseudomonadota</taxon>
        <taxon>Gammaproteobacteria</taxon>
        <taxon>Pseudomonadales</taxon>
        <taxon>Pseudomonadaceae</taxon>
        <taxon>Pseudomonas</taxon>
        <taxon>Pseudomonas syringae</taxon>
    </lineage>
</organism>
<gene>
    <name evidence="1" type="primary">arnF</name>
    <name type="ordered locus">Psyr_2695</name>
</gene>